<organism>
    <name type="scientific">Shewanella oneidensis (strain ATCC 700550 / JCM 31522 / CIP 106686 / LMG 19005 / NCIMB 14063 / MR-1)</name>
    <dbReference type="NCBI Taxonomy" id="211586"/>
    <lineage>
        <taxon>Bacteria</taxon>
        <taxon>Pseudomonadati</taxon>
        <taxon>Pseudomonadota</taxon>
        <taxon>Gammaproteobacteria</taxon>
        <taxon>Alteromonadales</taxon>
        <taxon>Shewanellaceae</taxon>
        <taxon>Shewanella</taxon>
    </lineage>
</organism>
<evidence type="ECO:0000255" key="1">
    <source>
        <dbReference type="HAMAP-Rule" id="MF_00528"/>
    </source>
</evidence>
<name>NTPPB_SHEON</name>
<sequence length="195" mass="21130">MMTPQLILASTSVYRQALLRKLGLPFEYCDPNIDETPIANESAQALVLRLAQAKAEAGAKYFPDGLIIGSDQVAVIDSKIIGKPLNRDNAIQQLSQASGKTITFYTGLALYNAQTGEINAQVEPFTVHFRHLAASQISAYVDKEQPFYCAGSFKSEGLGIALFSRLEGRDPNTLVGLPLILLTEMLLSQGIDVLA</sequence>
<reference key="1">
    <citation type="journal article" date="2002" name="Nat. Biotechnol.">
        <title>Genome sequence of the dissimilatory metal ion-reducing bacterium Shewanella oneidensis.</title>
        <authorList>
            <person name="Heidelberg J.F."/>
            <person name="Paulsen I.T."/>
            <person name="Nelson K.E."/>
            <person name="Gaidos E.J."/>
            <person name="Nelson W.C."/>
            <person name="Read T.D."/>
            <person name="Eisen J.A."/>
            <person name="Seshadri R."/>
            <person name="Ward N.L."/>
            <person name="Methe B.A."/>
            <person name="Clayton R.A."/>
            <person name="Meyer T."/>
            <person name="Tsapin A."/>
            <person name="Scott J."/>
            <person name="Beanan M.J."/>
            <person name="Brinkac L.M."/>
            <person name="Daugherty S.C."/>
            <person name="DeBoy R.T."/>
            <person name="Dodson R.J."/>
            <person name="Durkin A.S."/>
            <person name="Haft D.H."/>
            <person name="Kolonay J.F."/>
            <person name="Madupu R."/>
            <person name="Peterson J.D."/>
            <person name="Umayam L.A."/>
            <person name="White O."/>
            <person name="Wolf A.M."/>
            <person name="Vamathevan J.J."/>
            <person name="Weidman J.F."/>
            <person name="Impraim M."/>
            <person name="Lee K."/>
            <person name="Berry K.J."/>
            <person name="Lee C."/>
            <person name="Mueller J."/>
            <person name="Khouri H.M."/>
            <person name="Gill J."/>
            <person name="Utterback T.R."/>
            <person name="McDonald L.A."/>
            <person name="Feldblyum T.V."/>
            <person name="Smith H.O."/>
            <person name="Venter J.C."/>
            <person name="Nealson K.H."/>
            <person name="Fraser C.M."/>
        </authorList>
    </citation>
    <scope>NUCLEOTIDE SEQUENCE [LARGE SCALE GENOMIC DNA]</scope>
    <source>
        <strain>ATCC 700550 / JCM 31522 / CIP 106686 / LMG 19005 / NCIMB 14063 / MR-1</strain>
    </source>
</reference>
<comment type="function">
    <text evidence="1">Nucleoside triphosphate pyrophosphatase that hydrolyzes 7-methyl-GTP (m(7)GTP). May have a dual role in cell division arrest and in preventing the incorporation of modified nucleotides into cellular nucleic acids.</text>
</comment>
<comment type="catalytic activity">
    <reaction evidence="1">
        <text>N(7)-methyl-GTP + H2O = N(7)-methyl-GMP + diphosphate + H(+)</text>
        <dbReference type="Rhea" id="RHEA:58744"/>
        <dbReference type="ChEBI" id="CHEBI:15377"/>
        <dbReference type="ChEBI" id="CHEBI:15378"/>
        <dbReference type="ChEBI" id="CHEBI:33019"/>
        <dbReference type="ChEBI" id="CHEBI:58285"/>
        <dbReference type="ChEBI" id="CHEBI:87133"/>
    </reaction>
</comment>
<comment type="cofactor">
    <cofactor evidence="1">
        <name>a divalent metal cation</name>
        <dbReference type="ChEBI" id="CHEBI:60240"/>
    </cofactor>
</comment>
<comment type="subcellular location">
    <subcellularLocation>
        <location evidence="1">Cytoplasm</location>
    </subcellularLocation>
</comment>
<comment type="similarity">
    <text evidence="1">Belongs to the Maf family. YceF subfamily.</text>
</comment>
<proteinExistence type="inferred from homology"/>
<protein>
    <recommendedName>
        <fullName evidence="1">7-methyl-GTP pyrophosphatase</fullName>
        <shortName evidence="1">m(7)GTP pyrophosphatase</shortName>
        <ecNumber evidence="1">3.6.1.-</ecNumber>
    </recommendedName>
</protein>
<keyword id="KW-0963">Cytoplasm</keyword>
<keyword id="KW-0378">Hydrolase</keyword>
<keyword id="KW-0546">Nucleotide metabolism</keyword>
<keyword id="KW-1185">Reference proteome</keyword>
<gene>
    <name type="ordered locus">SO_2782</name>
</gene>
<accession>Q8EDG7</accession>
<feature type="chain" id="PRO_0000123060" description="7-methyl-GTP pyrophosphatase">
    <location>
        <begin position="1"/>
        <end position="195"/>
    </location>
</feature>
<feature type="active site" description="Proton acceptor" evidence="1">
    <location>
        <position position="71"/>
    </location>
</feature>
<feature type="site" description="Important for substrate specificity" evidence="1">
    <location>
        <position position="14"/>
    </location>
</feature>
<feature type="site" description="Important for substrate specificity" evidence="1">
    <location>
        <position position="72"/>
    </location>
</feature>
<feature type="site" description="Important for substrate specificity" evidence="1">
    <location>
        <position position="156"/>
    </location>
</feature>
<dbReference type="EC" id="3.6.1.-" evidence="1"/>
<dbReference type="EMBL" id="AE014299">
    <property type="protein sequence ID" value="AAN55807.2"/>
    <property type="molecule type" value="Genomic_DNA"/>
</dbReference>
<dbReference type="RefSeq" id="NP_718363.2">
    <property type="nucleotide sequence ID" value="NC_004347.2"/>
</dbReference>
<dbReference type="SMR" id="Q8EDG7"/>
<dbReference type="STRING" id="211586.SO_2782"/>
<dbReference type="PaxDb" id="211586-SO_2782"/>
<dbReference type="KEGG" id="son:SO_2782"/>
<dbReference type="PATRIC" id="fig|211586.12.peg.2682"/>
<dbReference type="eggNOG" id="COG0424">
    <property type="taxonomic scope" value="Bacteria"/>
</dbReference>
<dbReference type="HOGENOM" id="CLU_040416_1_0_6"/>
<dbReference type="OrthoDB" id="9813694at2"/>
<dbReference type="PhylomeDB" id="Q8EDG7"/>
<dbReference type="BioCyc" id="SONE211586:G1GMP-2568-MONOMER"/>
<dbReference type="Proteomes" id="UP000008186">
    <property type="component" value="Chromosome"/>
</dbReference>
<dbReference type="GO" id="GO:0005737">
    <property type="term" value="C:cytoplasm"/>
    <property type="evidence" value="ECO:0007669"/>
    <property type="project" value="UniProtKB-SubCell"/>
</dbReference>
<dbReference type="GO" id="GO:0047429">
    <property type="term" value="F:nucleoside triphosphate diphosphatase activity"/>
    <property type="evidence" value="ECO:0000318"/>
    <property type="project" value="GO_Central"/>
</dbReference>
<dbReference type="GO" id="GO:0009117">
    <property type="term" value="P:nucleotide metabolic process"/>
    <property type="evidence" value="ECO:0007669"/>
    <property type="project" value="UniProtKB-KW"/>
</dbReference>
<dbReference type="CDD" id="cd00555">
    <property type="entry name" value="Maf"/>
    <property type="match status" value="1"/>
</dbReference>
<dbReference type="FunFam" id="3.90.950.10:FF:000005">
    <property type="entry name" value="7-methyl-GTP pyrophosphatase"/>
    <property type="match status" value="1"/>
</dbReference>
<dbReference type="Gene3D" id="3.90.950.10">
    <property type="match status" value="1"/>
</dbReference>
<dbReference type="HAMAP" id="MF_00528">
    <property type="entry name" value="Maf"/>
    <property type="match status" value="1"/>
</dbReference>
<dbReference type="InterPro" id="IPR029001">
    <property type="entry name" value="ITPase-like_fam"/>
</dbReference>
<dbReference type="InterPro" id="IPR003697">
    <property type="entry name" value="Maf-like"/>
</dbReference>
<dbReference type="NCBIfam" id="TIGR00172">
    <property type="entry name" value="maf"/>
    <property type="match status" value="1"/>
</dbReference>
<dbReference type="PANTHER" id="PTHR43213:SF10">
    <property type="entry name" value="7-METHYL-GTP PYROPHOSPHATASE"/>
    <property type="match status" value="1"/>
</dbReference>
<dbReference type="PANTHER" id="PTHR43213">
    <property type="entry name" value="BIFUNCTIONAL DTTP/UTP PYROPHOSPHATASE/METHYLTRANSFERASE PROTEIN-RELATED"/>
    <property type="match status" value="1"/>
</dbReference>
<dbReference type="Pfam" id="PF02545">
    <property type="entry name" value="Maf"/>
    <property type="match status" value="1"/>
</dbReference>
<dbReference type="PIRSF" id="PIRSF006305">
    <property type="entry name" value="Maf"/>
    <property type="match status" value="1"/>
</dbReference>
<dbReference type="SUPFAM" id="SSF52972">
    <property type="entry name" value="ITPase-like"/>
    <property type="match status" value="1"/>
</dbReference>